<evidence type="ECO:0000250" key="1"/>
<evidence type="ECO:0000250" key="2">
    <source>
        <dbReference type="UniProtKB" id="Q13867"/>
    </source>
</evidence>
<evidence type="ECO:0000255" key="3">
    <source>
        <dbReference type="PROSITE-ProRule" id="PRU10088"/>
    </source>
</evidence>
<evidence type="ECO:0000269" key="4">
    <source>
    </source>
</evidence>
<gene>
    <name type="primary">BLMH</name>
</gene>
<keyword id="KW-0031">Aminopeptidase</keyword>
<keyword id="KW-0963">Cytoplasm</keyword>
<keyword id="KW-0378">Hydrolase</keyword>
<keyword id="KW-0645">Protease</keyword>
<keyword id="KW-1185">Reference proteome</keyword>
<keyword id="KW-0788">Thiol protease</keyword>
<accession>P87362</accession>
<sequence length="455" mass="52690">MNAHGLSTEKAAAFTRRLRAEPQFLLAQNVATCSDPLEVCLQRQVVQDTIQVFQHAVPAEGKPVTNQKNSGRCWIFSCLNAMRLPFMKKYNIEEFEFSQSYLFFWDKVERCYYFLNAFVETAQKKEPIDGRLVQFLLTNPTNDGGQWDMLVNIVEKYGVVPKKYFPESHTTEATRRMNEILNHKMREYCLRLRNMVATGTNKEELCAAMDTMIEEVFRIVSTCLGNPPETFCWEFRDKEKNYHKFGPMTPVQFYNEHVKPYFNMEDKVCLVNDPRPQNPYCQLYTVEYLGNMAGGRKTLYNNQPIEVLKKLAATSIKDGEAVWFGCDVAKHFYSKLGINDLNIFNHELVFGVSVKNMNKAERLIFGDSLMTHAMVLTAVSEKDGQEDCYEKWRVENSWGEDRGNKGYLIMTDDWFSEYVYEVVVDKKYVPEDVLAVMEQEPIVLPAWDPMGALAK</sequence>
<proteinExistence type="evidence at protein level"/>
<reference key="1">
    <citation type="journal article" date="1997" name="Eur. J. Biochem.">
        <title>cDNA cloning and expression of chicken aminopeptidase H, possessing endopeptidase as well as aminopeptidase activity.</title>
        <authorList>
            <person name="Adachi H."/>
            <person name="Tsujimoto M."/>
            <person name="Fukasawa M."/>
            <person name="Sato Y."/>
            <person name="Arai H."/>
            <person name="Inoue K."/>
            <person name="Nishimura T."/>
        </authorList>
    </citation>
    <scope>NUCLEOTIDE SEQUENCE [MRNA]</scope>
    <scope>SUBUNIT</scope>
</reference>
<name>BLMH_CHICK</name>
<feature type="chain" id="PRO_0000050549" description="Bleomycin hydrolase">
    <location>
        <begin position="1"/>
        <end position="455"/>
    </location>
</feature>
<feature type="active site" evidence="3">
    <location>
        <position position="73"/>
    </location>
</feature>
<feature type="active site" evidence="3">
    <location>
        <position position="372"/>
    </location>
</feature>
<feature type="active site" evidence="3">
    <location>
        <position position="396"/>
    </location>
</feature>
<protein>
    <recommendedName>
        <fullName>Bleomycin hydrolase</fullName>
        <shortName>BH</shortName>
        <shortName>BLM hydrolase</shortName>
        <shortName>BMH</shortName>
        <ecNumber>3.4.22.40</ecNumber>
    </recommendedName>
    <alternativeName>
        <fullName>Aminopeptidase H</fullName>
    </alternativeName>
</protein>
<organism>
    <name type="scientific">Gallus gallus</name>
    <name type="common">Chicken</name>
    <dbReference type="NCBI Taxonomy" id="9031"/>
    <lineage>
        <taxon>Eukaryota</taxon>
        <taxon>Metazoa</taxon>
        <taxon>Chordata</taxon>
        <taxon>Craniata</taxon>
        <taxon>Vertebrata</taxon>
        <taxon>Euteleostomi</taxon>
        <taxon>Archelosauria</taxon>
        <taxon>Archosauria</taxon>
        <taxon>Dinosauria</taxon>
        <taxon>Saurischia</taxon>
        <taxon>Theropoda</taxon>
        <taxon>Coelurosauria</taxon>
        <taxon>Aves</taxon>
        <taxon>Neognathae</taxon>
        <taxon>Galloanserae</taxon>
        <taxon>Galliformes</taxon>
        <taxon>Phasianidae</taxon>
        <taxon>Phasianinae</taxon>
        <taxon>Gallus</taxon>
    </lineage>
</organism>
<comment type="function">
    <text evidence="1">The normal physiological role of BLM hydrolase is unknown, but it catalyzes the inactivation of the antitumor drug BLM (a glycopeptide) by hydrolyzing the carboxamide bond of its B-aminoalaninamide moiety thus protecting normal and malignant cells from BLM toxicity.</text>
</comment>
<comment type="catalytic activity">
    <reaction>
        <text>Inactivates bleomycin B2 (a cytotoxic glycometallopeptide) by hydrolysis of a carboxyamide bond of beta-aminoalanine, but also shows general aminopeptidase activity. The specificity varies somewhat with source, but amino acid arylamides of Met, Leu and Ala are preferred.</text>
        <dbReference type="EC" id="3.4.22.40"/>
    </reaction>
</comment>
<comment type="subunit">
    <text evidence="4">Homooctamer.</text>
</comment>
<comment type="subcellular location">
    <subcellularLocation>
        <location evidence="2">Cytoplasm</location>
    </subcellularLocation>
</comment>
<comment type="similarity">
    <text evidence="3">Belongs to the peptidase C1 family.</text>
</comment>
<dbReference type="EC" id="3.4.22.40"/>
<dbReference type="EMBL" id="AB001322">
    <property type="protein sequence ID" value="BAA19236.1"/>
    <property type="molecule type" value="mRNA"/>
</dbReference>
<dbReference type="RefSeq" id="NP_990435.1">
    <property type="nucleotide sequence ID" value="NM_205104.1"/>
</dbReference>
<dbReference type="SMR" id="P87362"/>
<dbReference type="FunCoup" id="P87362">
    <property type="interactions" value="2226"/>
</dbReference>
<dbReference type="STRING" id="9031.ENSGALP00000006762"/>
<dbReference type="MEROPS" id="C01.084"/>
<dbReference type="PaxDb" id="9031-ENSGALP00000006762"/>
<dbReference type="GeneID" id="395996"/>
<dbReference type="KEGG" id="gga:395996"/>
<dbReference type="CTD" id="642"/>
<dbReference type="VEuPathDB" id="HostDB:geneid_395996"/>
<dbReference type="eggNOG" id="KOG4128">
    <property type="taxonomic scope" value="Eukaryota"/>
</dbReference>
<dbReference type="HOGENOM" id="CLU_038600_0_0_1"/>
<dbReference type="InParanoid" id="P87362"/>
<dbReference type="OrthoDB" id="2666448at2759"/>
<dbReference type="PhylomeDB" id="P87362"/>
<dbReference type="TreeFam" id="TF323372"/>
<dbReference type="Reactome" id="R-GGA-983168">
    <property type="pathway name" value="Antigen processing: Ubiquitination &amp; Proteasome degradation"/>
</dbReference>
<dbReference type="PRO" id="PR:P87362"/>
<dbReference type="Proteomes" id="UP000000539">
    <property type="component" value="Chromosome 19"/>
</dbReference>
<dbReference type="Bgee" id="ENSGALG00000004259">
    <property type="expression patterns" value="Expressed in muscle tissue and 14 other cell types or tissues"/>
</dbReference>
<dbReference type="GO" id="GO:0005737">
    <property type="term" value="C:cytoplasm"/>
    <property type="evidence" value="ECO:0000250"/>
    <property type="project" value="UniProtKB"/>
</dbReference>
<dbReference type="GO" id="GO:0004177">
    <property type="term" value="F:aminopeptidase activity"/>
    <property type="evidence" value="ECO:0000318"/>
    <property type="project" value="GO_Central"/>
</dbReference>
<dbReference type="GO" id="GO:0070005">
    <property type="term" value="F:cysteine-type aminopeptidase activity"/>
    <property type="evidence" value="ECO:0007669"/>
    <property type="project" value="InterPro"/>
</dbReference>
<dbReference type="GO" id="GO:0004197">
    <property type="term" value="F:cysteine-type endopeptidase activity"/>
    <property type="evidence" value="ECO:0007669"/>
    <property type="project" value="UniProtKB-EC"/>
</dbReference>
<dbReference type="GO" id="GO:0008234">
    <property type="term" value="F:cysteine-type peptidase activity"/>
    <property type="evidence" value="ECO:0000318"/>
    <property type="project" value="GO_Central"/>
</dbReference>
<dbReference type="GO" id="GO:0043418">
    <property type="term" value="P:homocysteine catabolic process"/>
    <property type="evidence" value="ECO:0000318"/>
    <property type="project" value="GO_Central"/>
</dbReference>
<dbReference type="GO" id="GO:0006508">
    <property type="term" value="P:proteolysis"/>
    <property type="evidence" value="ECO:0007669"/>
    <property type="project" value="UniProtKB-KW"/>
</dbReference>
<dbReference type="GO" id="GO:0009636">
    <property type="term" value="P:response to toxic substance"/>
    <property type="evidence" value="ECO:0000318"/>
    <property type="project" value="GO_Central"/>
</dbReference>
<dbReference type="CDD" id="cd00585">
    <property type="entry name" value="Peptidase_C1B"/>
    <property type="match status" value="1"/>
</dbReference>
<dbReference type="FunFam" id="3.90.70.10:FF:000021">
    <property type="entry name" value="Bleomycin hydrolase"/>
    <property type="match status" value="1"/>
</dbReference>
<dbReference type="Gene3D" id="3.90.70.10">
    <property type="entry name" value="Cysteine proteinases"/>
    <property type="match status" value="1"/>
</dbReference>
<dbReference type="InterPro" id="IPR038765">
    <property type="entry name" value="Papain-like_cys_pep_sf"/>
</dbReference>
<dbReference type="InterPro" id="IPR000169">
    <property type="entry name" value="Pept_cys_AS"/>
</dbReference>
<dbReference type="InterPro" id="IPR004134">
    <property type="entry name" value="Peptidase_C1B"/>
</dbReference>
<dbReference type="PANTHER" id="PTHR10363">
    <property type="entry name" value="BLEOMYCIN HYDROLASE"/>
    <property type="match status" value="1"/>
</dbReference>
<dbReference type="PANTHER" id="PTHR10363:SF2">
    <property type="entry name" value="BLEOMYCIN HYDROLASE"/>
    <property type="match status" value="1"/>
</dbReference>
<dbReference type="Pfam" id="PF03051">
    <property type="entry name" value="Peptidase_C1_2"/>
    <property type="match status" value="1"/>
</dbReference>
<dbReference type="PIRSF" id="PIRSF005700">
    <property type="entry name" value="PepC"/>
    <property type="match status" value="1"/>
</dbReference>
<dbReference type="SUPFAM" id="SSF54001">
    <property type="entry name" value="Cysteine proteinases"/>
    <property type="match status" value="1"/>
</dbReference>
<dbReference type="PROSITE" id="PS00139">
    <property type="entry name" value="THIOL_PROTEASE_CYS"/>
    <property type="match status" value="1"/>
</dbReference>